<dbReference type="EMBL" id="U30470">
    <property type="protein sequence ID" value="AAA74264.1"/>
    <property type="molecule type" value="mRNA"/>
</dbReference>
<dbReference type="EMBL" id="AM294381">
    <property type="protein sequence ID" value="CAL26311.1"/>
    <property type="molecule type" value="Genomic_DNA"/>
</dbReference>
<dbReference type="EMBL" id="AM294382">
    <property type="protein sequence ID" value="CAL26312.1"/>
    <property type="molecule type" value="Genomic_DNA"/>
</dbReference>
<dbReference type="EMBL" id="AM294383">
    <property type="protein sequence ID" value="CAL26313.1"/>
    <property type="molecule type" value="Genomic_DNA"/>
</dbReference>
<dbReference type="EMBL" id="AM294384">
    <property type="protein sequence ID" value="CAL26314.1"/>
    <property type="molecule type" value="Genomic_DNA"/>
</dbReference>
<dbReference type="EMBL" id="AM294385">
    <property type="protein sequence ID" value="CAL26315.1"/>
    <property type="molecule type" value="Genomic_DNA"/>
</dbReference>
<dbReference type="EMBL" id="AM294386">
    <property type="protein sequence ID" value="CAL26316.1"/>
    <property type="molecule type" value="Genomic_DNA"/>
</dbReference>
<dbReference type="EMBL" id="AM294387">
    <property type="protein sequence ID" value="CAL26317.1"/>
    <property type="molecule type" value="Genomic_DNA"/>
</dbReference>
<dbReference type="EMBL" id="AM294388">
    <property type="protein sequence ID" value="CAL26318.1"/>
    <property type="molecule type" value="Genomic_DNA"/>
</dbReference>
<dbReference type="EMBL" id="AM294389">
    <property type="protein sequence ID" value="CAL26319.1"/>
    <property type="molecule type" value="Genomic_DNA"/>
</dbReference>
<dbReference type="EMBL" id="AM294390">
    <property type="protein sequence ID" value="CAL26320.1"/>
    <property type="molecule type" value="Genomic_DNA"/>
</dbReference>
<dbReference type="EMBL" id="FM245455">
    <property type="protein sequence ID" value="CAR93381.1"/>
    <property type="molecule type" value="Genomic_DNA"/>
</dbReference>
<dbReference type="EMBL" id="FM245456">
    <property type="protein sequence ID" value="CAR93382.1"/>
    <property type="molecule type" value="Genomic_DNA"/>
</dbReference>
<dbReference type="EMBL" id="FM245457">
    <property type="protein sequence ID" value="CAR93383.1"/>
    <property type="molecule type" value="Genomic_DNA"/>
</dbReference>
<dbReference type="EMBL" id="FM245458">
    <property type="protein sequence ID" value="CAR93384.1"/>
    <property type="molecule type" value="Genomic_DNA"/>
</dbReference>
<dbReference type="EMBL" id="FM245459">
    <property type="protein sequence ID" value="CAR93385.1"/>
    <property type="molecule type" value="Genomic_DNA"/>
</dbReference>
<dbReference type="EMBL" id="FM245460">
    <property type="protein sequence ID" value="CAR93386.1"/>
    <property type="molecule type" value="Genomic_DNA"/>
</dbReference>
<dbReference type="EMBL" id="FM245461">
    <property type="protein sequence ID" value="CAR93387.1"/>
    <property type="molecule type" value="Genomic_DNA"/>
</dbReference>
<dbReference type="EMBL" id="FM245462">
    <property type="protein sequence ID" value="CAR93388.1"/>
    <property type="molecule type" value="Genomic_DNA"/>
</dbReference>
<dbReference type="EMBL" id="FM245463">
    <property type="protein sequence ID" value="CAR93389.1"/>
    <property type="molecule type" value="Genomic_DNA"/>
</dbReference>
<dbReference type="EMBL" id="FM245464">
    <property type="protein sequence ID" value="CAR93390.1"/>
    <property type="molecule type" value="Genomic_DNA"/>
</dbReference>
<dbReference type="EMBL" id="FM245465">
    <property type="protein sequence ID" value="CAR93391.1"/>
    <property type="molecule type" value="Genomic_DNA"/>
</dbReference>
<dbReference type="EMBL" id="AE014297">
    <property type="protein sequence ID" value="AAF55155.1"/>
    <property type="molecule type" value="Genomic_DNA"/>
</dbReference>
<dbReference type="EMBL" id="AY118922">
    <property type="protein sequence ID" value="AAM50782.1"/>
    <property type="molecule type" value="mRNA"/>
</dbReference>
<dbReference type="RefSeq" id="NP_650438.2">
    <property type="nucleotide sequence ID" value="NM_142181.3"/>
</dbReference>
<dbReference type="SMR" id="P53997"/>
<dbReference type="BioGRID" id="66908">
    <property type="interactions" value="8"/>
</dbReference>
<dbReference type="DIP" id="DIP-19697N"/>
<dbReference type="FunCoup" id="P53997">
    <property type="interactions" value="2723"/>
</dbReference>
<dbReference type="IntAct" id="P53997">
    <property type="interactions" value="114"/>
</dbReference>
<dbReference type="STRING" id="7227.FBpp0082521"/>
<dbReference type="iPTMnet" id="P53997"/>
<dbReference type="PaxDb" id="7227-FBpp0082521"/>
<dbReference type="DNASU" id="41844"/>
<dbReference type="EnsemblMetazoa" id="FBtr0083062">
    <property type="protein sequence ID" value="FBpp0082521"/>
    <property type="gene ID" value="FBgn0014879"/>
</dbReference>
<dbReference type="GeneID" id="41844"/>
<dbReference type="KEGG" id="dme:Dmel_CG4299"/>
<dbReference type="UCSC" id="CG4299-RA">
    <property type="organism name" value="d. melanogaster"/>
</dbReference>
<dbReference type="AGR" id="FB:FBgn0014879"/>
<dbReference type="CTD" id="6418"/>
<dbReference type="FlyBase" id="FBgn0014879">
    <property type="gene designation" value="Set"/>
</dbReference>
<dbReference type="VEuPathDB" id="VectorBase:FBgn0014879"/>
<dbReference type="eggNOG" id="KOG1508">
    <property type="taxonomic scope" value="Eukaryota"/>
</dbReference>
<dbReference type="GeneTree" id="ENSGT00940000169229"/>
<dbReference type="HOGENOM" id="CLU_051687_4_0_1"/>
<dbReference type="InParanoid" id="P53997"/>
<dbReference type="OMA" id="PGKEFPN"/>
<dbReference type="OrthoDB" id="19419at2759"/>
<dbReference type="PhylomeDB" id="P53997"/>
<dbReference type="Reactome" id="R-DME-450520">
    <property type="pathway name" value="HuR (ELAVL1) binds and stabilizes mRNA"/>
</dbReference>
<dbReference type="BioGRID-ORCS" id="41844">
    <property type="hits" value="0 hits in 3 CRISPR screens"/>
</dbReference>
<dbReference type="ChiTaRS" id="Set">
    <property type="organism name" value="fly"/>
</dbReference>
<dbReference type="GenomeRNAi" id="41844"/>
<dbReference type="PRO" id="PR:P53997"/>
<dbReference type="Proteomes" id="UP000000803">
    <property type="component" value="Chromosome 3R"/>
</dbReference>
<dbReference type="Bgee" id="FBgn0014879">
    <property type="expression patterns" value="Expressed in wing disc and 155 other cell types or tissues"/>
</dbReference>
<dbReference type="GO" id="GO:0000785">
    <property type="term" value="C:chromatin"/>
    <property type="evidence" value="ECO:0000318"/>
    <property type="project" value="GO_Central"/>
</dbReference>
<dbReference type="GO" id="GO:0005634">
    <property type="term" value="C:nucleus"/>
    <property type="evidence" value="ECO:0000318"/>
    <property type="project" value="GO_Central"/>
</dbReference>
<dbReference type="GO" id="GO:0003682">
    <property type="term" value="F:chromatin binding"/>
    <property type="evidence" value="ECO:0000318"/>
    <property type="project" value="GO_Central"/>
</dbReference>
<dbReference type="GO" id="GO:0042393">
    <property type="term" value="F:histone binding"/>
    <property type="evidence" value="ECO:0000318"/>
    <property type="project" value="GO_Central"/>
</dbReference>
<dbReference type="GO" id="GO:0006334">
    <property type="term" value="P:nucleosome assembly"/>
    <property type="evidence" value="ECO:0007669"/>
    <property type="project" value="InterPro"/>
</dbReference>
<dbReference type="FunFam" id="3.30.1120.90:FF:000002">
    <property type="entry name" value="Testis-specific Y-encoded-like protein 2"/>
    <property type="match status" value="1"/>
</dbReference>
<dbReference type="Gene3D" id="1.20.5.1500">
    <property type="match status" value="1"/>
</dbReference>
<dbReference type="Gene3D" id="3.30.1120.90">
    <property type="entry name" value="Nucleosome assembly protein"/>
    <property type="match status" value="1"/>
</dbReference>
<dbReference type="InterPro" id="IPR037231">
    <property type="entry name" value="NAP-like_sf"/>
</dbReference>
<dbReference type="InterPro" id="IPR002164">
    <property type="entry name" value="NAP_family"/>
</dbReference>
<dbReference type="PANTHER" id="PTHR11875">
    <property type="entry name" value="TESTIS-SPECIFIC Y-ENCODED PROTEIN"/>
    <property type="match status" value="1"/>
</dbReference>
<dbReference type="Pfam" id="PF00956">
    <property type="entry name" value="NAP"/>
    <property type="match status" value="1"/>
</dbReference>
<dbReference type="SUPFAM" id="SSF143113">
    <property type="entry name" value="NAP-like"/>
    <property type="match status" value="1"/>
</dbReference>
<keyword id="KW-0597">Phosphoprotein</keyword>
<keyword id="KW-1185">Reference proteome</keyword>
<comment type="subunit">
    <text>Interacts specifically with B-type cyclins.</text>
</comment>
<comment type="similarity">
    <text evidence="3">Belongs to the nucleosome assembly protein (NAP) family.</text>
</comment>
<name>SET_DROME</name>
<gene>
    <name type="primary">Set</name>
    <name type="ORF">CG4299</name>
</gene>
<organism>
    <name type="scientific">Drosophila melanogaster</name>
    <name type="common">Fruit fly</name>
    <dbReference type="NCBI Taxonomy" id="7227"/>
    <lineage>
        <taxon>Eukaryota</taxon>
        <taxon>Metazoa</taxon>
        <taxon>Ecdysozoa</taxon>
        <taxon>Arthropoda</taxon>
        <taxon>Hexapoda</taxon>
        <taxon>Insecta</taxon>
        <taxon>Pterygota</taxon>
        <taxon>Neoptera</taxon>
        <taxon>Endopterygota</taxon>
        <taxon>Diptera</taxon>
        <taxon>Brachycera</taxon>
        <taxon>Muscomorpha</taxon>
        <taxon>Ephydroidea</taxon>
        <taxon>Drosophilidae</taxon>
        <taxon>Drosophila</taxon>
        <taxon>Sophophora</taxon>
    </lineage>
</organism>
<evidence type="ECO:0000256" key="1">
    <source>
        <dbReference type="SAM" id="MobiDB-lite"/>
    </source>
</evidence>
<evidence type="ECO:0000269" key="2">
    <source>
    </source>
</evidence>
<evidence type="ECO:0000305" key="3"/>
<reference key="1">
    <citation type="journal article" date="1995" name="J. Cell Biol.">
        <title>Members of the NAP/SET family of proteins interact specifically with B-type cyclins.</title>
        <authorList>
            <person name="Kellogg D.R."/>
            <person name="Kikuchi A."/>
            <person name="Fujii-Nakata T."/>
            <person name="Turck C.W."/>
            <person name="Murray A.W."/>
        </authorList>
    </citation>
    <scope>NUCLEOTIDE SEQUENCE [MRNA]</scope>
</reference>
<reference key="2">
    <citation type="journal article" date="2006" name="Genetics">
        <title>Widespread adaptive evolution of Drosophila genes with sex-biased expression.</title>
        <authorList>
            <person name="Proeschel M."/>
            <person name="Zhang Z."/>
            <person name="Parsch J."/>
        </authorList>
    </citation>
    <scope>NUCLEOTIDE SEQUENCE [GENOMIC DNA]</scope>
    <source>
        <strain>ZBMEL131</strain>
        <strain>ZBMEL157</strain>
        <strain>ZBMEL186</strain>
        <strain>ZBMEL191</strain>
        <strain>ZBMEL229</strain>
        <strain>ZBMEL377</strain>
        <strain>ZBMEL398</strain>
        <strain>ZBMEL82</strain>
        <strain>ZBMEL84</strain>
        <strain>ZBMEL95</strain>
    </source>
</reference>
<reference key="3">
    <citation type="journal article" date="2009" name="Mol. Biol. Evol.">
        <title>The influence of demography and weak selection on the McDonald-Kreitman test: an empirical study in Drosophila.</title>
        <authorList>
            <person name="Parsch J."/>
            <person name="Zhang Z."/>
            <person name="Baines J.F."/>
        </authorList>
    </citation>
    <scope>NUCLEOTIDE SEQUENCE [GENOMIC DNA]</scope>
    <source>
        <strain>MEL01</strain>
        <strain>MEL11</strain>
        <strain>MEL12</strain>
        <strain>MEL13</strain>
        <strain>MEL14</strain>
        <strain>MEL15</strain>
        <strain>MEL16</strain>
        <strain>MEL17</strain>
        <strain>MEL18</strain>
        <strain>MEL19</strain>
        <strain>MEL20</strain>
    </source>
</reference>
<reference key="4">
    <citation type="journal article" date="2000" name="Science">
        <title>The genome sequence of Drosophila melanogaster.</title>
        <authorList>
            <person name="Adams M.D."/>
            <person name="Celniker S.E."/>
            <person name="Holt R.A."/>
            <person name="Evans C.A."/>
            <person name="Gocayne J.D."/>
            <person name="Amanatides P.G."/>
            <person name="Scherer S.E."/>
            <person name="Li P.W."/>
            <person name="Hoskins R.A."/>
            <person name="Galle R.F."/>
            <person name="George R.A."/>
            <person name="Lewis S.E."/>
            <person name="Richards S."/>
            <person name="Ashburner M."/>
            <person name="Henderson S.N."/>
            <person name="Sutton G.G."/>
            <person name="Wortman J.R."/>
            <person name="Yandell M.D."/>
            <person name="Zhang Q."/>
            <person name="Chen L.X."/>
            <person name="Brandon R.C."/>
            <person name="Rogers Y.-H.C."/>
            <person name="Blazej R.G."/>
            <person name="Champe M."/>
            <person name="Pfeiffer B.D."/>
            <person name="Wan K.H."/>
            <person name="Doyle C."/>
            <person name="Baxter E.G."/>
            <person name="Helt G."/>
            <person name="Nelson C.R."/>
            <person name="Miklos G.L.G."/>
            <person name="Abril J.F."/>
            <person name="Agbayani A."/>
            <person name="An H.-J."/>
            <person name="Andrews-Pfannkoch C."/>
            <person name="Baldwin D."/>
            <person name="Ballew R.M."/>
            <person name="Basu A."/>
            <person name="Baxendale J."/>
            <person name="Bayraktaroglu L."/>
            <person name="Beasley E.M."/>
            <person name="Beeson K.Y."/>
            <person name="Benos P.V."/>
            <person name="Berman B.P."/>
            <person name="Bhandari D."/>
            <person name="Bolshakov S."/>
            <person name="Borkova D."/>
            <person name="Botchan M.R."/>
            <person name="Bouck J."/>
            <person name="Brokstein P."/>
            <person name="Brottier P."/>
            <person name="Burtis K.C."/>
            <person name="Busam D.A."/>
            <person name="Butler H."/>
            <person name="Cadieu E."/>
            <person name="Center A."/>
            <person name="Chandra I."/>
            <person name="Cherry J.M."/>
            <person name="Cawley S."/>
            <person name="Dahlke C."/>
            <person name="Davenport L.B."/>
            <person name="Davies P."/>
            <person name="de Pablos B."/>
            <person name="Delcher A."/>
            <person name="Deng Z."/>
            <person name="Mays A.D."/>
            <person name="Dew I."/>
            <person name="Dietz S.M."/>
            <person name="Dodson K."/>
            <person name="Doup L.E."/>
            <person name="Downes M."/>
            <person name="Dugan-Rocha S."/>
            <person name="Dunkov B.C."/>
            <person name="Dunn P."/>
            <person name="Durbin K.J."/>
            <person name="Evangelista C.C."/>
            <person name="Ferraz C."/>
            <person name="Ferriera S."/>
            <person name="Fleischmann W."/>
            <person name="Fosler C."/>
            <person name="Gabrielian A.E."/>
            <person name="Garg N.S."/>
            <person name="Gelbart W.M."/>
            <person name="Glasser K."/>
            <person name="Glodek A."/>
            <person name="Gong F."/>
            <person name="Gorrell J.H."/>
            <person name="Gu Z."/>
            <person name="Guan P."/>
            <person name="Harris M."/>
            <person name="Harris N.L."/>
            <person name="Harvey D.A."/>
            <person name="Heiman T.J."/>
            <person name="Hernandez J.R."/>
            <person name="Houck J."/>
            <person name="Hostin D."/>
            <person name="Houston K.A."/>
            <person name="Howland T.J."/>
            <person name="Wei M.-H."/>
            <person name="Ibegwam C."/>
            <person name="Jalali M."/>
            <person name="Kalush F."/>
            <person name="Karpen G.H."/>
            <person name="Ke Z."/>
            <person name="Kennison J.A."/>
            <person name="Ketchum K.A."/>
            <person name="Kimmel B.E."/>
            <person name="Kodira C.D."/>
            <person name="Kraft C.L."/>
            <person name="Kravitz S."/>
            <person name="Kulp D."/>
            <person name="Lai Z."/>
            <person name="Lasko P."/>
            <person name="Lei Y."/>
            <person name="Levitsky A.A."/>
            <person name="Li J.H."/>
            <person name="Li Z."/>
            <person name="Liang Y."/>
            <person name="Lin X."/>
            <person name="Liu X."/>
            <person name="Mattei B."/>
            <person name="McIntosh T.C."/>
            <person name="McLeod M.P."/>
            <person name="McPherson D."/>
            <person name="Merkulov G."/>
            <person name="Milshina N.V."/>
            <person name="Mobarry C."/>
            <person name="Morris J."/>
            <person name="Moshrefi A."/>
            <person name="Mount S.M."/>
            <person name="Moy M."/>
            <person name="Murphy B."/>
            <person name="Murphy L."/>
            <person name="Muzny D.M."/>
            <person name="Nelson D.L."/>
            <person name="Nelson D.R."/>
            <person name="Nelson K.A."/>
            <person name="Nixon K."/>
            <person name="Nusskern D.R."/>
            <person name="Pacleb J.M."/>
            <person name="Palazzolo M."/>
            <person name="Pittman G.S."/>
            <person name="Pan S."/>
            <person name="Pollard J."/>
            <person name="Puri V."/>
            <person name="Reese M.G."/>
            <person name="Reinert K."/>
            <person name="Remington K."/>
            <person name="Saunders R.D.C."/>
            <person name="Scheeler F."/>
            <person name="Shen H."/>
            <person name="Shue B.C."/>
            <person name="Siden-Kiamos I."/>
            <person name="Simpson M."/>
            <person name="Skupski M.P."/>
            <person name="Smith T.J."/>
            <person name="Spier E."/>
            <person name="Spradling A.C."/>
            <person name="Stapleton M."/>
            <person name="Strong R."/>
            <person name="Sun E."/>
            <person name="Svirskas R."/>
            <person name="Tector C."/>
            <person name="Turner R."/>
            <person name="Venter E."/>
            <person name="Wang A.H."/>
            <person name="Wang X."/>
            <person name="Wang Z.-Y."/>
            <person name="Wassarman D.A."/>
            <person name="Weinstock G.M."/>
            <person name="Weissenbach J."/>
            <person name="Williams S.M."/>
            <person name="Woodage T."/>
            <person name="Worley K.C."/>
            <person name="Wu D."/>
            <person name="Yang S."/>
            <person name="Yao Q.A."/>
            <person name="Ye J."/>
            <person name="Yeh R.-F."/>
            <person name="Zaveri J.S."/>
            <person name="Zhan M."/>
            <person name="Zhang G."/>
            <person name="Zhao Q."/>
            <person name="Zheng L."/>
            <person name="Zheng X.H."/>
            <person name="Zhong F.N."/>
            <person name="Zhong W."/>
            <person name="Zhou X."/>
            <person name="Zhu S.C."/>
            <person name="Zhu X."/>
            <person name="Smith H.O."/>
            <person name="Gibbs R.A."/>
            <person name="Myers E.W."/>
            <person name="Rubin G.M."/>
            <person name="Venter J.C."/>
        </authorList>
    </citation>
    <scope>NUCLEOTIDE SEQUENCE [LARGE SCALE GENOMIC DNA]</scope>
    <source>
        <strain>Berkeley</strain>
    </source>
</reference>
<reference key="5">
    <citation type="journal article" date="2002" name="Genome Biol.">
        <title>Annotation of the Drosophila melanogaster euchromatic genome: a systematic review.</title>
        <authorList>
            <person name="Misra S."/>
            <person name="Crosby M.A."/>
            <person name="Mungall C.J."/>
            <person name="Matthews B.B."/>
            <person name="Campbell K.S."/>
            <person name="Hradecky P."/>
            <person name="Huang Y."/>
            <person name="Kaminker J.S."/>
            <person name="Millburn G.H."/>
            <person name="Prochnik S.E."/>
            <person name="Smith C.D."/>
            <person name="Tupy J.L."/>
            <person name="Whitfield E.J."/>
            <person name="Bayraktaroglu L."/>
            <person name="Berman B.P."/>
            <person name="Bettencourt B.R."/>
            <person name="Celniker S.E."/>
            <person name="de Grey A.D.N.J."/>
            <person name="Drysdale R.A."/>
            <person name="Harris N.L."/>
            <person name="Richter J."/>
            <person name="Russo S."/>
            <person name="Schroeder A.J."/>
            <person name="Shu S.Q."/>
            <person name="Stapleton M."/>
            <person name="Yamada C."/>
            <person name="Ashburner M."/>
            <person name="Gelbart W.M."/>
            <person name="Rubin G.M."/>
            <person name="Lewis S.E."/>
        </authorList>
    </citation>
    <scope>GENOME REANNOTATION</scope>
    <source>
        <strain>Berkeley</strain>
    </source>
</reference>
<reference key="6">
    <citation type="journal article" date="2002" name="Genome Biol.">
        <title>A Drosophila full-length cDNA resource.</title>
        <authorList>
            <person name="Stapleton M."/>
            <person name="Carlson J.W."/>
            <person name="Brokstein P."/>
            <person name="Yu C."/>
            <person name="Champe M."/>
            <person name="George R.A."/>
            <person name="Guarin H."/>
            <person name="Kronmiller B."/>
            <person name="Pacleb J.M."/>
            <person name="Park S."/>
            <person name="Wan K.H."/>
            <person name="Rubin G.M."/>
            <person name="Celniker S.E."/>
        </authorList>
    </citation>
    <scope>NUCLEOTIDE SEQUENCE [LARGE SCALE MRNA]</scope>
    <source>
        <strain>Berkeley</strain>
        <tissue>Embryo</tissue>
    </source>
</reference>
<reference key="7">
    <citation type="journal article" date="2008" name="J. Proteome Res.">
        <title>Phosphoproteome analysis of Drosophila melanogaster embryos.</title>
        <authorList>
            <person name="Zhai B."/>
            <person name="Villen J."/>
            <person name="Beausoleil S.A."/>
            <person name="Mintseris J."/>
            <person name="Gygi S.P."/>
        </authorList>
    </citation>
    <scope>PHOSPHORYLATION [LARGE SCALE ANALYSIS] AT SER-30; SER-148 AND SER-152</scope>
    <scope>IDENTIFICATION BY MASS SPECTROMETRY</scope>
    <source>
        <tissue>Embryo</tissue>
    </source>
</reference>
<accession>P53997</accession>
<accession>Q540W9</accession>
<accession>Q9VFA5</accession>
<sequence>MSSVPKRAKLDGAPADGNTSAAAGNNEEESEALEQIDACQNEIDALNEKASEEILKVEQKYNKLRKPCYEKRSELVKRIPNFWVTSFINHPQVSGILDEEEEECLHALNKLEVEEFEDIKSGYRINFHFDENPYFENKVLTKEFHLNSAAASENGDWPASTSTPIKWKEGKNLLKLLLTKPYGNKKKRNSEYKTFFDWFSDNTDPVNDEIAELIKDDLWPNPLQYYLVPDIEVEPEDEEDNEDNDEEAFDDEDGEDGEGEEEEEDEDDK</sequence>
<protein>
    <recommendedName>
        <fullName>Protein SET</fullName>
    </recommendedName>
</protein>
<feature type="chain" id="PRO_0000185665" description="Protein SET">
    <location>
        <begin position="1"/>
        <end position="269"/>
    </location>
</feature>
<feature type="region of interest" description="Disordered" evidence="1">
    <location>
        <begin position="1"/>
        <end position="33"/>
    </location>
</feature>
<feature type="region of interest" description="Disordered" evidence="1">
    <location>
        <begin position="227"/>
        <end position="269"/>
    </location>
</feature>
<feature type="compositionally biased region" description="Acidic residues" evidence="1">
    <location>
        <begin position="231"/>
        <end position="269"/>
    </location>
</feature>
<feature type="modified residue" description="Phosphoserine" evidence="2">
    <location>
        <position position="30"/>
    </location>
</feature>
<feature type="modified residue" description="Phosphoserine" evidence="2">
    <location>
        <position position="148"/>
    </location>
</feature>
<feature type="modified residue" description="Phosphoserine" evidence="2">
    <location>
        <position position="152"/>
    </location>
</feature>
<feature type="sequence conflict" description="In Ref. 1; AAA74264." evidence="3" ref="1">
    <location>
        <position position="15"/>
    </location>
</feature>
<proteinExistence type="evidence at protein level"/>